<protein>
    <recommendedName>
        <fullName>UPF0328 protein ECU09_2030</fullName>
    </recommendedName>
</protein>
<feature type="chain" id="PRO_0000223134" description="UPF0328 protein ECU09_2030">
    <location>
        <begin position="1"/>
        <end position="268"/>
    </location>
</feature>
<organism>
    <name type="scientific">Encephalitozoon cuniculi (strain GB-M1)</name>
    <name type="common">Microsporidian parasite</name>
    <dbReference type="NCBI Taxonomy" id="284813"/>
    <lineage>
        <taxon>Eukaryota</taxon>
        <taxon>Fungi</taxon>
        <taxon>Fungi incertae sedis</taxon>
        <taxon>Microsporidia</taxon>
        <taxon>Unikaryonidae</taxon>
        <taxon>Encephalitozoon</taxon>
    </lineage>
</organism>
<sequence>MNITYVPEIHRTDKQHTENLRHWRKILGIAPFVSIVFPAIMCLIFTKDRFEKSPFLKFIILLLPFSYSAVQYALLRTNWKSDNKPEGILQSILYHTLSLLLLAFAAISILSITAFTLDKWESSESIFFSIVLPSFFIPPTYLLSTSCRLVPGQIGFTDTGINVLIDIPILLCPLVSLVLIIALEETECCYYSAIISSVFILIRLLREKYSPSEKSTLPTAPWRVAILVLILTLAALIYAFMMWGSMDILNDHFGLLNKLKRVFPFTNA</sequence>
<name>Y9K3_ENCCU</name>
<keyword id="KW-1185">Reference proteome</keyword>
<evidence type="ECO:0000269" key="1">
    <source>
    </source>
</evidence>
<evidence type="ECO:0000305" key="2"/>
<reference key="1">
    <citation type="journal article" date="2001" name="Nature">
        <title>Genome sequence and gene compaction of the eukaryote parasite Encephalitozoon cuniculi.</title>
        <authorList>
            <person name="Katinka M.D."/>
            <person name="Duprat S."/>
            <person name="Cornillot E."/>
            <person name="Metenier G."/>
            <person name="Thomarat F."/>
            <person name="Prensier G."/>
            <person name="Barbe V."/>
            <person name="Peyretaillade E."/>
            <person name="Brottier P."/>
            <person name="Wincker P."/>
            <person name="Delbac F."/>
            <person name="El Alaoui H."/>
            <person name="Peyret P."/>
            <person name="Saurin W."/>
            <person name="Gouy M."/>
            <person name="Weissenbach J."/>
            <person name="Vivares C.P."/>
        </authorList>
    </citation>
    <scope>NUCLEOTIDE SEQUENCE [LARGE SCALE GENOMIC DNA]</scope>
    <source>
        <strain>GB-M1</strain>
    </source>
</reference>
<reference key="2">
    <citation type="journal article" date="2006" name="Proteomics">
        <title>Proteomic analysis of the eukaryotic parasite Encephalitozoon cuniculi (microsporidia): a reference map for proteins expressed in late sporogonial stages.</title>
        <authorList>
            <person name="Brosson D."/>
            <person name="Kuhn L."/>
            <person name="Delbac F."/>
            <person name="Garin J."/>
            <person name="Vivares C.P."/>
            <person name="Texier C."/>
        </authorList>
    </citation>
    <scope>IDENTIFICATION BY MASS SPECTROMETRY [LARGE SCALE ANALYSIS]</scope>
    <scope>DEVELOPMENTAL STAGE</scope>
</reference>
<proteinExistence type="evidence at protein level"/>
<dbReference type="EMBL" id="AL590451">
    <property type="protein sequence ID" value="CAD27176.1"/>
    <property type="molecule type" value="Genomic_DNA"/>
</dbReference>
<dbReference type="RefSeq" id="NP_001402457.1">
    <property type="nucleotide sequence ID" value="NM_001415524.1"/>
</dbReference>
<dbReference type="RefSeq" id="NP_585932.1">
    <property type="nucleotide sequence ID" value="NM_001041554.1"/>
</dbReference>
<dbReference type="RefSeq" id="XP_955757.1">
    <property type="nucleotide sequence ID" value="XM_950664.1"/>
</dbReference>
<dbReference type="SMR" id="P0CS99"/>
<dbReference type="GeneID" id="860545"/>
<dbReference type="KEGG" id="ecu:ECU07_0040"/>
<dbReference type="VEuPathDB" id="MicrosporidiaDB:ECU09_2030"/>
<dbReference type="HOGENOM" id="CLU_059413_0_0_1"/>
<dbReference type="InParanoid" id="P0CS99"/>
<dbReference type="OrthoDB" id="2200858at2759"/>
<dbReference type="Proteomes" id="UP000000819">
    <property type="component" value="Chromosome IX"/>
</dbReference>
<dbReference type="InterPro" id="IPR019081">
    <property type="entry name" value="UPF0328"/>
</dbReference>
<dbReference type="Pfam" id="PF09591">
    <property type="entry name" value="DUF2463"/>
    <property type="match status" value="1"/>
</dbReference>
<comment type="developmental stage">
    <text evidence="1">Expressed in late sporogonial stages.</text>
</comment>
<comment type="similarity">
    <text evidence="2">Belongs to the UPF0328 family.</text>
</comment>
<gene>
    <name type="ordered locus">ECU09_2030</name>
</gene>
<accession>P0CS99</accession>
<accession>Q8ST40</accession>